<reference key="1">
    <citation type="journal article" date="2006" name="Proc. Natl. Acad. Sci. U.S.A.">
        <title>Comparative genomics of the lactic acid bacteria.</title>
        <authorList>
            <person name="Makarova K.S."/>
            <person name="Slesarev A."/>
            <person name="Wolf Y.I."/>
            <person name="Sorokin A."/>
            <person name="Mirkin B."/>
            <person name="Koonin E.V."/>
            <person name="Pavlov A."/>
            <person name="Pavlova N."/>
            <person name="Karamychev V."/>
            <person name="Polouchine N."/>
            <person name="Shakhova V."/>
            <person name="Grigoriev I."/>
            <person name="Lou Y."/>
            <person name="Rohksar D."/>
            <person name="Lucas S."/>
            <person name="Huang K."/>
            <person name="Goodstein D.M."/>
            <person name="Hawkins T."/>
            <person name="Plengvidhya V."/>
            <person name="Welker D."/>
            <person name="Hughes J."/>
            <person name="Goh Y."/>
            <person name="Benson A."/>
            <person name="Baldwin K."/>
            <person name="Lee J.-H."/>
            <person name="Diaz-Muniz I."/>
            <person name="Dosti B."/>
            <person name="Smeianov V."/>
            <person name="Wechter W."/>
            <person name="Barabote R."/>
            <person name="Lorca G."/>
            <person name="Altermann E."/>
            <person name="Barrangou R."/>
            <person name="Ganesan B."/>
            <person name="Xie Y."/>
            <person name="Rawsthorne H."/>
            <person name="Tamir D."/>
            <person name="Parker C."/>
            <person name="Breidt F."/>
            <person name="Broadbent J.R."/>
            <person name="Hutkins R."/>
            <person name="O'Sullivan D."/>
            <person name="Steele J."/>
            <person name="Unlu G."/>
            <person name="Saier M.H. Jr."/>
            <person name="Klaenhammer T."/>
            <person name="Richardson P."/>
            <person name="Kozyavkin S."/>
            <person name="Weimer B.C."/>
            <person name="Mills D.A."/>
        </authorList>
    </citation>
    <scope>NUCLEOTIDE SEQUENCE [LARGE SCALE GENOMIC DNA]</scope>
    <source>
        <strain>ATCC 367 / BCRC 12310 / CIP 105137 / JCM 1170 / LMG 11437 / NCIMB 947 / NCTC 947</strain>
    </source>
</reference>
<reference key="2">
    <citation type="journal article" date="2013" name="PLoS ONE">
        <title>Rapid identification of sequences for orphan enzymes to power accurate protein annotation.</title>
        <authorList>
            <person name="Ramkissoon K.R."/>
            <person name="Miller J.K."/>
            <person name="Ojha S."/>
            <person name="Watson D.S."/>
            <person name="Bomar M.G."/>
            <person name="Galande A.K."/>
            <person name="Shearer A.G."/>
        </authorList>
    </citation>
    <scope>IDENTIFICATION BY MASS SPECTROMETRY</scope>
    <scope>FUNCTION</scope>
    <scope>BIOTECHNOLOGY</scope>
</reference>
<protein>
    <recommendedName>
        <fullName>Maltose epimerase</fullName>
        <ecNumber>5.1.3.21</ecNumber>
    </recommendedName>
</protein>
<proteinExistence type="evidence at protein level"/>
<evidence type="ECO:0000250" key="1"/>
<evidence type="ECO:0000269" key="2">
    <source>
    </source>
</evidence>
<evidence type="ECO:0000305" key="3"/>
<evidence type="ECO:0000305" key="4">
    <source>
    </source>
</evidence>
<keyword id="KW-0119">Carbohydrate metabolism</keyword>
<keyword id="KW-0413">Isomerase</keyword>
<keyword id="KW-1185">Reference proteome</keyword>
<organism>
    <name type="scientific">Levilactobacillus brevis (strain ATCC 367 / BCRC 12310 / CIP 105137 / JCM 1170 / LMG 11437 / NCIMB 947 / NCTC 947)</name>
    <name type="common">Lactobacillus brevis</name>
    <dbReference type="NCBI Taxonomy" id="387344"/>
    <lineage>
        <taxon>Bacteria</taxon>
        <taxon>Bacillati</taxon>
        <taxon>Bacillota</taxon>
        <taxon>Bacilli</taxon>
        <taxon>Lactobacillales</taxon>
        <taxon>Lactobacillaceae</taxon>
        <taxon>Levilactobacillus</taxon>
    </lineage>
</organism>
<sequence>MEITKSAAGTLNQQDVSKYVLTNQQGTQVAVLTWGATLQEFSVVEDGKRHSLIVNKPDLAGYDHNPYYLCQALGRVAGRIAGAQFELDGQTVHLEANEEPNASHGGPHGFTFVNWDATTNQTADTASVVLTHTSTPADDRYPGNLETTITYTLTEENRLDITFDAQSDAATLFNPTIHTYFNVTDDQHDLDQQWVKLSGDKRLVLDQAKIPTGEMVPTAGTGYDFSQPRTVKDGLDQLHQTGQVEYDDAFVVEPSKDTPIATIGDTTGHREVSIYSDRNGLVVFTANPTDDARADVRDYNALAMEAQTLPDAIHHADFGDVVLPANQPVEHTISYQYTRK</sequence>
<feature type="chain" id="PRO_0000425563" description="Maltose epimerase">
    <location>
        <begin position="1"/>
        <end position="340"/>
    </location>
</feature>
<feature type="active site" description="Proton donor" evidence="1">
    <location>
        <position position="178"/>
    </location>
</feature>
<feature type="active site" description="Proton acceptor" evidence="1">
    <location>
        <position position="305"/>
    </location>
</feature>
<feature type="binding site" evidence="1">
    <location>
        <position position="79"/>
    </location>
    <ligand>
        <name>substrate</name>
    </ligand>
</feature>
<feature type="binding site" evidence="1">
    <location>
        <position position="247"/>
    </location>
    <ligand>
        <name>substrate</name>
    </ligand>
</feature>
<comment type="function">
    <text evidence="4">Catalyzes the interconversion of alpha and beta anomers of maltose.</text>
</comment>
<comment type="catalytic activity">
    <reaction>
        <text>alpha-maltose = beta-maltose</text>
        <dbReference type="Rhea" id="RHEA:21228"/>
        <dbReference type="ChEBI" id="CHEBI:18147"/>
        <dbReference type="ChEBI" id="CHEBI:18167"/>
        <dbReference type="EC" id="5.1.3.21"/>
    </reaction>
</comment>
<comment type="pathway">
    <text>Carbohydrate metabolism; hexose metabolism.</text>
</comment>
<comment type="biotechnology">
    <text evidence="2">Available as a commercial product from Sigma Aldrich (catalog number M0902).</text>
</comment>
<comment type="similarity">
    <text evidence="3">Belongs to the aldose epimerase family.</text>
</comment>
<accession>Q03PA4</accession>
<name>MALEP_LEVBA</name>
<dbReference type="EC" id="5.1.3.21"/>
<dbReference type="EMBL" id="CP000416">
    <property type="protein sequence ID" value="ABJ64968.1"/>
    <property type="molecule type" value="Genomic_DNA"/>
</dbReference>
<dbReference type="RefSeq" id="WP_011668589.1">
    <property type="nucleotide sequence ID" value="NC_008497.1"/>
</dbReference>
<dbReference type="SMR" id="Q03PA4"/>
<dbReference type="STRING" id="387344.LVIS_1908"/>
<dbReference type="KEGG" id="lbr:LVIS_1908"/>
<dbReference type="PATRIC" id="fig|387344.15.peg.1813"/>
<dbReference type="eggNOG" id="COG2017">
    <property type="taxonomic scope" value="Bacteria"/>
</dbReference>
<dbReference type="HOGENOM" id="CLU_031753_1_1_9"/>
<dbReference type="UniPathway" id="UPA00242"/>
<dbReference type="Proteomes" id="UP000001652">
    <property type="component" value="Chromosome"/>
</dbReference>
<dbReference type="GO" id="GO:0005737">
    <property type="term" value="C:cytoplasm"/>
    <property type="evidence" value="ECO:0007669"/>
    <property type="project" value="TreeGrafter"/>
</dbReference>
<dbReference type="GO" id="GO:0004034">
    <property type="term" value="F:aldose 1-epimerase activity"/>
    <property type="evidence" value="ECO:0007669"/>
    <property type="project" value="TreeGrafter"/>
</dbReference>
<dbReference type="GO" id="GO:0030246">
    <property type="term" value="F:carbohydrate binding"/>
    <property type="evidence" value="ECO:0007669"/>
    <property type="project" value="InterPro"/>
</dbReference>
<dbReference type="GO" id="GO:0050558">
    <property type="term" value="F:maltose epimerase activity"/>
    <property type="evidence" value="ECO:0007669"/>
    <property type="project" value="UniProtKB-EC"/>
</dbReference>
<dbReference type="GO" id="GO:0033499">
    <property type="term" value="P:galactose catabolic process via UDP-galactose, Leloir pathway"/>
    <property type="evidence" value="ECO:0007669"/>
    <property type="project" value="TreeGrafter"/>
</dbReference>
<dbReference type="GO" id="GO:0006006">
    <property type="term" value="P:glucose metabolic process"/>
    <property type="evidence" value="ECO:0007669"/>
    <property type="project" value="TreeGrafter"/>
</dbReference>
<dbReference type="CDD" id="cd09019">
    <property type="entry name" value="galactose_mutarotase_like"/>
    <property type="match status" value="1"/>
</dbReference>
<dbReference type="Gene3D" id="2.70.98.10">
    <property type="match status" value="1"/>
</dbReference>
<dbReference type="InterPro" id="IPR015443">
    <property type="entry name" value="Aldose_1-epimerase"/>
</dbReference>
<dbReference type="InterPro" id="IPR008183">
    <property type="entry name" value="Aldose_1/G6P_1-epimerase"/>
</dbReference>
<dbReference type="InterPro" id="IPR011013">
    <property type="entry name" value="Gal_mutarotase_sf_dom"/>
</dbReference>
<dbReference type="InterPro" id="IPR047215">
    <property type="entry name" value="Galactose_mutarotase-like"/>
</dbReference>
<dbReference type="InterPro" id="IPR014718">
    <property type="entry name" value="GH-type_carb-bd"/>
</dbReference>
<dbReference type="PANTHER" id="PTHR10091">
    <property type="entry name" value="ALDOSE-1-EPIMERASE"/>
    <property type="match status" value="1"/>
</dbReference>
<dbReference type="PANTHER" id="PTHR10091:SF0">
    <property type="entry name" value="GALACTOSE MUTAROTASE"/>
    <property type="match status" value="1"/>
</dbReference>
<dbReference type="Pfam" id="PF01263">
    <property type="entry name" value="Aldose_epim"/>
    <property type="match status" value="1"/>
</dbReference>
<dbReference type="PIRSF" id="PIRSF005096">
    <property type="entry name" value="GALM"/>
    <property type="match status" value="1"/>
</dbReference>
<dbReference type="SUPFAM" id="SSF74650">
    <property type="entry name" value="Galactose mutarotase-like"/>
    <property type="match status" value="1"/>
</dbReference>
<gene>
    <name type="ordered locus">LVIS_1908</name>
</gene>